<proteinExistence type="inferred from homology"/>
<protein>
    <recommendedName>
        <fullName evidence="1">RNA polymerase sigma factor SigA</fullName>
    </recommendedName>
</protein>
<organism>
    <name type="scientific">Staphylococcus epidermidis (strain ATCC 12228 / FDA PCI 1200)</name>
    <dbReference type="NCBI Taxonomy" id="176280"/>
    <lineage>
        <taxon>Bacteria</taxon>
        <taxon>Bacillati</taxon>
        <taxon>Bacillota</taxon>
        <taxon>Bacilli</taxon>
        <taxon>Bacillales</taxon>
        <taxon>Staphylococcaceae</taxon>
        <taxon>Staphylococcus</taxon>
    </lineage>
</organism>
<reference key="1">
    <citation type="journal article" date="2003" name="Mol. Microbiol.">
        <title>Genome-based analysis of virulence genes in a non-biofilm-forming Staphylococcus epidermidis strain (ATCC 12228).</title>
        <authorList>
            <person name="Zhang Y.-Q."/>
            <person name="Ren S.-X."/>
            <person name="Li H.-L."/>
            <person name="Wang Y.-X."/>
            <person name="Fu G."/>
            <person name="Yang J."/>
            <person name="Qin Z.-Q."/>
            <person name="Miao Y.-G."/>
            <person name="Wang W.-Y."/>
            <person name="Chen R.-S."/>
            <person name="Shen Y."/>
            <person name="Chen Z."/>
            <person name="Yuan Z.-H."/>
            <person name="Zhao G.-P."/>
            <person name="Qu D."/>
            <person name="Danchin A."/>
            <person name="Wen Y.-M."/>
        </authorList>
    </citation>
    <scope>NUCLEOTIDE SEQUENCE [LARGE SCALE GENOMIC DNA]</scope>
    <source>
        <strain>ATCC 12228 / FDA PCI 1200</strain>
    </source>
</reference>
<evidence type="ECO:0000255" key="1">
    <source>
        <dbReference type="HAMAP-Rule" id="MF_00963"/>
    </source>
</evidence>
<evidence type="ECO:0000256" key="2">
    <source>
        <dbReference type="SAM" id="MobiDB-lite"/>
    </source>
</evidence>
<comment type="function">
    <text evidence="1">Sigma factors are initiation factors that promote the attachment of RNA polymerase to specific initiation sites and are then released. This sigma factor is the primary sigma factor during exponential growth.</text>
</comment>
<comment type="subunit">
    <text evidence="1">Interacts transiently with the RNA polymerase catalytic core.</text>
</comment>
<comment type="subcellular location">
    <subcellularLocation>
        <location evidence="1">Cytoplasm</location>
    </subcellularLocation>
</comment>
<comment type="similarity">
    <text evidence="1">Belongs to the sigma-70 factor family. RpoD/SigA subfamily.</text>
</comment>
<name>SIGA_STAES</name>
<feature type="chain" id="PRO_0000093920" description="RNA polymerase sigma factor SigA">
    <location>
        <begin position="1"/>
        <end position="368"/>
    </location>
</feature>
<feature type="DNA-binding region" description="H-T-H motif" evidence="1">
    <location>
        <begin position="329"/>
        <end position="348"/>
    </location>
</feature>
<feature type="region of interest" description="Disordered" evidence="2">
    <location>
        <begin position="71"/>
        <end position="90"/>
    </location>
</feature>
<feature type="region of interest" description="Sigma-70 factor domain-2" evidence="1">
    <location>
        <begin position="135"/>
        <end position="205"/>
    </location>
</feature>
<feature type="region of interest" description="Sigma-70 factor domain-3" evidence="1">
    <location>
        <begin position="214"/>
        <end position="290"/>
    </location>
</feature>
<feature type="region of interest" description="Sigma-70 factor domain-4" evidence="1">
    <location>
        <begin position="303"/>
        <end position="356"/>
    </location>
</feature>
<feature type="short sequence motif" description="Interaction with polymerase core subunit RpoC">
    <location>
        <begin position="159"/>
        <end position="162"/>
    </location>
</feature>
<feature type="compositionally biased region" description="Basic and acidic residues" evidence="2">
    <location>
        <begin position="71"/>
        <end position="83"/>
    </location>
</feature>
<keyword id="KW-0963">Cytoplasm</keyword>
<keyword id="KW-0238">DNA-binding</keyword>
<keyword id="KW-0731">Sigma factor</keyword>
<keyword id="KW-0804">Transcription</keyword>
<keyword id="KW-0805">Transcription regulation</keyword>
<accession>Q8CP24</accession>
<dbReference type="EMBL" id="AE015929">
    <property type="protein sequence ID" value="AAO04847.1"/>
    <property type="molecule type" value="Genomic_DNA"/>
</dbReference>
<dbReference type="RefSeq" id="NP_764803.1">
    <property type="nucleotide sequence ID" value="NC_004461.1"/>
</dbReference>
<dbReference type="RefSeq" id="WP_002440071.1">
    <property type="nucleotide sequence ID" value="NZ_WBME01000008.1"/>
</dbReference>
<dbReference type="SMR" id="Q8CP24"/>
<dbReference type="GeneID" id="50018636"/>
<dbReference type="KEGG" id="sep:SE_1248"/>
<dbReference type="PATRIC" id="fig|176280.10.peg.1216"/>
<dbReference type="eggNOG" id="COG0568">
    <property type="taxonomic scope" value="Bacteria"/>
</dbReference>
<dbReference type="HOGENOM" id="CLU_014793_3_3_9"/>
<dbReference type="OrthoDB" id="9809557at2"/>
<dbReference type="Proteomes" id="UP000001411">
    <property type="component" value="Chromosome"/>
</dbReference>
<dbReference type="GO" id="GO:0005737">
    <property type="term" value="C:cytoplasm"/>
    <property type="evidence" value="ECO:0007669"/>
    <property type="project" value="UniProtKB-SubCell"/>
</dbReference>
<dbReference type="GO" id="GO:0003677">
    <property type="term" value="F:DNA binding"/>
    <property type="evidence" value="ECO:0007669"/>
    <property type="project" value="UniProtKB-UniRule"/>
</dbReference>
<dbReference type="GO" id="GO:0016987">
    <property type="term" value="F:sigma factor activity"/>
    <property type="evidence" value="ECO:0007669"/>
    <property type="project" value="UniProtKB-UniRule"/>
</dbReference>
<dbReference type="GO" id="GO:0006352">
    <property type="term" value="P:DNA-templated transcription initiation"/>
    <property type="evidence" value="ECO:0007669"/>
    <property type="project" value="UniProtKB-UniRule"/>
</dbReference>
<dbReference type="CDD" id="cd06171">
    <property type="entry name" value="Sigma70_r4"/>
    <property type="match status" value="1"/>
</dbReference>
<dbReference type="FunFam" id="1.10.10.10:FF:000002">
    <property type="entry name" value="RNA polymerase sigma factor SigA"/>
    <property type="match status" value="1"/>
</dbReference>
<dbReference type="FunFam" id="1.10.10.10:FF:000004">
    <property type="entry name" value="RNA polymerase sigma factor SigA"/>
    <property type="match status" value="1"/>
</dbReference>
<dbReference type="FunFam" id="1.10.601.10:FF:000001">
    <property type="entry name" value="RNA polymerase sigma factor SigA"/>
    <property type="match status" value="1"/>
</dbReference>
<dbReference type="Gene3D" id="1.10.601.10">
    <property type="entry name" value="RNA Polymerase Primary Sigma Factor"/>
    <property type="match status" value="2"/>
</dbReference>
<dbReference type="Gene3D" id="1.10.220.120">
    <property type="entry name" value="Sigma-70 factor, region 1.1"/>
    <property type="match status" value="1"/>
</dbReference>
<dbReference type="Gene3D" id="1.10.10.10">
    <property type="entry name" value="Winged helix-like DNA-binding domain superfamily/Winged helix DNA-binding domain"/>
    <property type="match status" value="2"/>
</dbReference>
<dbReference type="HAMAP" id="MF_00963">
    <property type="entry name" value="Sigma70_RpoD_SigA"/>
    <property type="match status" value="1"/>
</dbReference>
<dbReference type="InterPro" id="IPR014284">
    <property type="entry name" value="RNA_pol_sigma-70_dom"/>
</dbReference>
<dbReference type="InterPro" id="IPR000943">
    <property type="entry name" value="RNA_pol_sigma70"/>
</dbReference>
<dbReference type="InterPro" id="IPR009042">
    <property type="entry name" value="RNA_pol_sigma70_r1_2"/>
</dbReference>
<dbReference type="InterPro" id="IPR007627">
    <property type="entry name" value="RNA_pol_sigma70_r2"/>
</dbReference>
<dbReference type="InterPro" id="IPR007624">
    <property type="entry name" value="RNA_pol_sigma70_r3"/>
</dbReference>
<dbReference type="InterPro" id="IPR007630">
    <property type="entry name" value="RNA_pol_sigma70_r4"/>
</dbReference>
<dbReference type="InterPro" id="IPR007127">
    <property type="entry name" value="RNA_pol_sigma_70_r1_1"/>
</dbReference>
<dbReference type="InterPro" id="IPR042189">
    <property type="entry name" value="RNA_pol_sigma_70_r1_1_sf"/>
</dbReference>
<dbReference type="InterPro" id="IPR013325">
    <property type="entry name" value="RNA_pol_sigma_r2"/>
</dbReference>
<dbReference type="InterPro" id="IPR013324">
    <property type="entry name" value="RNA_pol_sigma_r3/r4-like"/>
</dbReference>
<dbReference type="InterPro" id="IPR012760">
    <property type="entry name" value="RNA_pol_sigma_RpoD_C"/>
</dbReference>
<dbReference type="InterPro" id="IPR050239">
    <property type="entry name" value="Sigma-70_RNA_pol_init_factors"/>
</dbReference>
<dbReference type="InterPro" id="IPR028630">
    <property type="entry name" value="Sigma70_RpoD"/>
</dbReference>
<dbReference type="InterPro" id="IPR036388">
    <property type="entry name" value="WH-like_DNA-bd_sf"/>
</dbReference>
<dbReference type="NCBIfam" id="NF006666">
    <property type="entry name" value="PRK09210.1"/>
    <property type="match status" value="1"/>
</dbReference>
<dbReference type="NCBIfam" id="TIGR02393">
    <property type="entry name" value="RpoD_Cterm"/>
    <property type="match status" value="1"/>
</dbReference>
<dbReference type="NCBIfam" id="TIGR02937">
    <property type="entry name" value="sigma70-ECF"/>
    <property type="match status" value="1"/>
</dbReference>
<dbReference type="PANTHER" id="PTHR30603">
    <property type="entry name" value="RNA POLYMERASE SIGMA FACTOR RPO"/>
    <property type="match status" value="1"/>
</dbReference>
<dbReference type="PANTHER" id="PTHR30603:SF60">
    <property type="entry name" value="RNA POLYMERASE SIGMA FACTOR RPOD"/>
    <property type="match status" value="1"/>
</dbReference>
<dbReference type="Pfam" id="PF03979">
    <property type="entry name" value="Sigma70_r1_1"/>
    <property type="match status" value="1"/>
</dbReference>
<dbReference type="Pfam" id="PF00140">
    <property type="entry name" value="Sigma70_r1_2"/>
    <property type="match status" value="1"/>
</dbReference>
<dbReference type="Pfam" id="PF04542">
    <property type="entry name" value="Sigma70_r2"/>
    <property type="match status" value="1"/>
</dbReference>
<dbReference type="Pfam" id="PF04539">
    <property type="entry name" value="Sigma70_r3"/>
    <property type="match status" value="1"/>
</dbReference>
<dbReference type="Pfam" id="PF04545">
    <property type="entry name" value="Sigma70_r4"/>
    <property type="match status" value="1"/>
</dbReference>
<dbReference type="PRINTS" id="PR00046">
    <property type="entry name" value="SIGMA70FCT"/>
</dbReference>
<dbReference type="SUPFAM" id="SSF88946">
    <property type="entry name" value="Sigma2 domain of RNA polymerase sigma factors"/>
    <property type="match status" value="1"/>
</dbReference>
<dbReference type="SUPFAM" id="SSF88659">
    <property type="entry name" value="Sigma3 and sigma4 domains of RNA polymerase sigma factors"/>
    <property type="match status" value="2"/>
</dbReference>
<dbReference type="PROSITE" id="PS00715">
    <property type="entry name" value="SIGMA70_1"/>
    <property type="match status" value="1"/>
</dbReference>
<dbReference type="PROSITE" id="PS00716">
    <property type="entry name" value="SIGMA70_2"/>
    <property type="match status" value="1"/>
</dbReference>
<gene>
    <name evidence="1" type="primary">sigA</name>
    <name type="synonym">rpoD</name>
    <name type="ordered locus">SE_1248</name>
</gene>
<sequence length="368" mass="42256">MSDNQVKIKKQTIDPTLTLEDVKKQLIDKGKKEGHLSHEEIAEKLQNFEMDSDQMDDFFDQLNDNDITLVNEKDSSDTDDKINPNDLSAPPGVKINDPVRMYLKEIGRVNLLSAQEEIELAKRIEQGDEIAKSRLAEANLRLVVSIAKRYVGRGMLFLDLIQEGNMGLIKAVEKFDFSKGFKFSTYATWWIRQAITRAIADQARTIRIPVHMVETINKLIRVQRQLLQDLGRDPAPEEIGEEMDLPPEKVREILKIAQEPVSLETPIGEEDDSHLGDFIEDQEAQSPSDHAAYELLKEQLEDVLDTLTDREENVLRLRFGLDDGRTRTLEEVGKVFGVTRERIRQIEAKALRKLRHPSRSKRLKDFMD</sequence>